<evidence type="ECO:0000255" key="1">
    <source>
        <dbReference type="HAMAP-Rule" id="MF_00821"/>
    </source>
</evidence>
<keyword id="KW-0143">Chaperone</keyword>
<keyword id="KW-0963">Cytoplasm</keyword>
<keyword id="KW-0653">Protein transport</keyword>
<keyword id="KW-0811">Translocation</keyword>
<keyword id="KW-0813">Transport</keyword>
<name>SECB_PECCP</name>
<accession>C6DIA3</accession>
<sequence>MSEQNNTEMAFQIQRIYTKDISFEAPNAPQVFQQEWQPEVKLDLDTASSQLADDIYEVVLRVTVTASLGEETAFLCEVQQGGIFTVGGIEGTQLAHCLGAYCPNILFPYARECITSLVSRGTFPQLNLAPVNFDALFMNYLQQQTEGEGAAQHQDA</sequence>
<comment type="function">
    <text evidence="1">One of the proteins required for the normal export of preproteins out of the cell cytoplasm. It is a molecular chaperone that binds to a subset of precursor proteins, maintaining them in a translocation-competent state. It also specifically binds to its receptor SecA.</text>
</comment>
<comment type="subunit">
    <text evidence="1">Homotetramer, a dimer of dimers. One homotetramer interacts with 1 SecA dimer.</text>
</comment>
<comment type="subcellular location">
    <subcellularLocation>
        <location evidence="1">Cytoplasm</location>
    </subcellularLocation>
</comment>
<comment type="similarity">
    <text evidence="1">Belongs to the SecB family.</text>
</comment>
<organism>
    <name type="scientific">Pectobacterium carotovorum subsp. carotovorum (strain PC1)</name>
    <dbReference type="NCBI Taxonomy" id="561230"/>
    <lineage>
        <taxon>Bacteria</taxon>
        <taxon>Pseudomonadati</taxon>
        <taxon>Pseudomonadota</taxon>
        <taxon>Gammaproteobacteria</taxon>
        <taxon>Enterobacterales</taxon>
        <taxon>Pectobacteriaceae</taxon>
        <taxon>Pectobacterium</taxon>
    </lineage>
</organism>
<proteinExistence type="inferred from homology"/>
<protein>
    <recommendedName>
        <fullName evidence="1">Protein-export protein SecB</fullName>
    </recommendedName>
</protein>
<feature type="chain" id="PRO_1000213107" description="Protein-export protein SecB">
    <location>
        <begin position="1"/>
        <end position="156"/>
    </location>
</feature>
<reference key="1">
    <citation type="submission" date="2009-07" db="EMBL/GenBank/DDBJ databases">
        <title>Complete sequence of Pectobacterium carotovorum subsp. carotovorum PC1.</title>
        <authorList>
            <consortium name="US DOE Joint Genome Institute"/>
            <person name="Lucas S."/>
            <person name="Copeland A."/>
            <person name="Lapidus A."/>
            <person name="Glavina del Rio T."/>
            <person name="Tice H."/>
            <person name="Bruce D."/>
            <person name="Goodwin L."/>
            <person name="Pitluck S."/>
            <person name="Munk A.C."/>
            <person name="Brettin T."/>
            <person name="Detter J.C."/>
            <person name="Han C."/>
            <person name="Tapia R."/>
            <person name="Larimer F."/>
            <person name="Land M."/>
            <person name="Hauser L."/>
            <person name="Kyrpides N."/>
            <person name="Mikhailova N."/>
            <person name="Balakrishnan V."/>
            <person name="Glasner J."/>
            <person name="Perna N.T."/>
        </authorList>
    </citation>
    <scope>NUCLEOTIDE SEQUENCE [LARGE SCALE GENOMIC DNA]</scope>
    <source>
        <strain>PC1</strain>
    </source>
</reference>
<gene>
    <name evidence="1" type="primary">secB</name>
    <name type="ordered locus">PC1_4082</name>
</gene>
<dbReference type="EMBL" id="CP001657">
    <property type="protein sequence ID" value="ACT15097.1"/>
    <property type="molecule type" value="Genomic_DNA"/>
</dbReference>
<dbReference type="RefSeq" id="WP_014913761.1">
    <property type="nucleotide sequence ID" value="NC_012917.1"/>
</dbReference>
<dbReference type="SMR" id="C6DIA3"/>
<dbReference type="STRING" id="561230.PC1_4082"/>
<dbReference type="GeneID" id="90765369"/>
<dbReference type="KEGG" id="pct:PC1_4082"/>
<dbReference type="eggNOG" id="COG1952">
    <property type="taxonomic scope" value="Bacteria"/>
</dbReference>
<dbReference type="HOGENOM" id="CLU_111574_1_0_6"/>
<dbReference type="OrthoDB" id="9795145at2"/>
<dbReference type="Proteomes" id="UP000002736">
    <property type="component" value="Chromosome"/>
</dbReference>
<dbReference type="GO" id="GO:0005737">
    <property type="term" value="C:cytoplasm"/>
    <property type="evidence" value="ECO:0007669"/>
    <property type="project" value="UniProtKB-SubCell"/>
</dbReference>
<dbReference type="GO" id="GO:0051082">
    <property type="term" value="F:unfolded protein binding"/>
    <property type="evidence" value="ECO:0007669"/>
    <property type="project" value="InterPro"/>
</dbReference>
<dbReference type="GO" id="GO:0006457">
    <property type="term" value="P:protein folding"/>
    <property type="evidence" value="ECO:0007669"/>
    <property type="project" value="UniProtKB-UniRule"/>
</dbReference>
<dbReference type="GO" id="GO:0051262">
    <property type="term" value="P:protein tetramerization"/>
    <property type="evidence" value="ECO:0007669"/>
    <property type="project" value="InterPro"/>
</dbReference>
<dbReference type="GO" id="GO:0015031">
    <property type="term" value="P:protein transport"/>
    <property type="evidence" value="ECO:0007669"/>
    <property type="project" value="UniProtKB-UniRule"/>
</dbReference>
<dbReference type="CDD" id="cd00557">
    <property type="entry name" value="Translocase_SecB"/>
    <property type="match status" value="1"/>
</dbReference>
<dbReference type="FunFam" id="3.10.420.10:FF:000001">
    <property type="entry name" value="Protein-export chaperone SecB"/>
    <property type="match status" value="1"/>
</dbReference>
<dbReference type="Gene3D" id="3.10.420.10">
    <property type="entry name" value="SecB-like"/>
    <property type="match status" value="1"/>
</dbReference>
<dbReference type="HAMAP" id="MF_00821">
    <property type="entry name" value="SecB"/>
    <property type="match status" value="1"/>
</dbReference>
<dbReference type="InterPro" id="IPR003708">
    <property type="entry name" value="SecB"/>
</dbReference>
<dbReference type="InterPro" id="IPR035958">
    <property type="entry name" value="SecB-like_sf"/>
</dbReference>
<dbReference type="NCBIfam" id="NF004390">
    <property type="entry name" value="PRK05751.1-1"/>
    <property type="match status" value="1"/>
</dbReference>
<dbReference type="NCBIfam" id="NF004393">
    <property type="entry name" value="PRK05751.1-4"/>
    <property type="match status" value="1"/>
</dbReference>
<dbReference type="NCBIfam" id="TIGR00809">
    <property type="entry name" value="secB"/>
    <property type="match status" value="1"/>
</dbReference>
<dbReference type="PANTHER" id="PTHR36918">
    <property type="match status" value="1"/>
</dbReference>
<dbReference type="PANTHER" id="PTHR36918:SF1">
    <property type="entry name" value="PROTEIN-EXPORT PROTEIN SECB"/>
    <property type="match status" value="1"/>
</dbReference>
<dbReference type="Pfam" id="PF02556">
    <property type="entry name" value="SecB"/>
    <property type="match status" value="1"/>
</dbReference>
<dbReference type="PRINTS" id="PR01594">
    <property type="entry name" value="SECBCHAPRONE"/>
</dbReference>
<dbReference type="SUPFAM" id="SSF54611">
    <property type="entry name" value="SecB-like"/>
    <property type="match status" value="1"/>
</dbReference>